<evidence type="ECO:0000255" key="1">
    <source>
        <dbReference type="HAMAP-Rule" id="MF_00071"/>
    </source>
</evidence>
<proteinExistence type="inferred from homology"/>
<dbReference type="EC" id="3.6.5.n1" evidence="1"/>
<dbReference type="EMBL" id="AE017262">
    <property type="protein sequence ID" value="AAT04273.1"/>
    <property type="molecule type" value="Genomic_DNA"/>
</dbReference>
<dbReference type="RefSeq" id="WP_003726525.1">
    <property type="nucleotide sequence ID" value="NC_002973.6"/>
</dbReference>
<dbReference type="SMR" id="Q71ZJ1"/>
<dbReference type="GeneID" id="86846403"/>
<dbReference type="KEGG" id="lmf:LMOf2365_1498"/>
<dbReference type="HOGENOM" id="CLU_009995_3_3_9"/>
<dbReference type="GO" id="GO:0005886">
    <property type="term" value="C:plasma membrane"/>
    <property type="evidence" value="ECO:0007669"/>
    <property type="project" value="UniProtKB-SubCell"/>
</dbReference>
<dbReference type="GO" id="GO:0005525">
    <property type="term" value="F:GTP binding"/>
    <property type="evidence" value="ECO:0007669"/>
    <property type="project" value="UniProtKB-UniRule"/>
</dbReference>
<dbReference type="GO" id="GO:0003924">
    <property type="term" value="F:GTPase activity"/>
    <property type="evidence" value="ECO:0007669"/>
    <property type="project" value="UniProtKB-UniRule"/>
</dbReference>
<dbReference type="GO" id="GO:0043022">
    <property type="term" value="F:ribosome binding"/>
    <property type="evidence" value="ECO:0007669"/>
    <property type="project" value="UniProtKB-UniRule"/>
</dbReference>
<dbReference type="GO" id="GO:0003746">
    <property type="term" value="F:translation elongation factor activity"/>
    <property type="evidence" value="ECO:0007669"/>
    <property type="project" value="UniProtKB-UniRule"/>
</dbReference>
<dbReference type="GO" id="GO:0045727">
    <property type="term" value="P:positive regulation of translation"/>
    <property type="evidence" value="ECO:0007669"/>
    <property type="project" value="UniProtKB-UniRule"/>
</dbReference>
<dbReference type="CDD" id="cd03699">
    <property type="entry name" value="EF4_II"/>
    <property type="match status" value="1"/>
</dbReference>
<dbReference type="CDD" id="cd16260">
    <property type="entry name" value="EF4_III"/>
    <property type="match status" value="1"/>
</dbReference>
<dbReference type="CDD" id="cd01890">
    <property type="entry name" value="LepA"/>
    <property type="match status" value="1"/>
</dbReference>
<dbReference type="CDD" id="cd03709">
    <property type="entry name" value="lepA_C"/>
    <property type="match status" value="1"/>
</dbReference>
<dbReference type="FunFam" id="3.40.50.300:FF:000078">
    <property type="entry name" value="Elongation factor 4"/>
    <property type="match status" value="1"/>
</dbReference>
<dbReference type="FunFam" id="2.40.30.10:FF:000015">
    <property type="entry name" value="Translation factor GUF1, mitochondrial"/>
    <property type="match status" value="1"/>
</dbReference>
<dbReference type="FunFam" id="3.30.70.240:FF:000007">
    <property type="entry name" value="Translation factor GUF1, mitochondrial"/>
    <property type="match status" value="1"/>
</dbReference>
<dbReference type="FunFam" id="3.30.70.2570:FF:000001">
    <property type="entry name" value="Translation factor GUF1, mitochondrial"/>
    <property type="match status" value="1"/>
</dbReference>
<dbReference type="FunFam" id="3.30.70.870:FF:000004">
    <property type="entry name" value="Translation factor GUF1, mitochondrial"/>
    <property type="match status" value="1"/>
</dbReference>
<dbReference type="Gene3D" id="3.30.70.240">
    <property type="match status" value="1"/>
</dbReference>
<dbReference type="Gene3D" id="3.30.70.2570">
    <property type="entry name" value="Elongation factor 4, C-terminal domain"/>
    <property type="match status" value="1"/>
</dbReference>
<dbReference type="Gene3D" id="3.30.70.870">
    <property type="entry name" value="Elongation Factor G (Translational Gtpase), domain 3"/>
    <property type="match status" value="1"/>
</dbReference>
<dbReference type="Gene3D" id="3.40.50.300">
    <property type="entry name" value="P-loop containing nucleotide triphosphate hydrolases"/>
    <property type="match status" value="1"/>
</dbReference>
<dbReference type="Gene3D" id="2.40.30.10">
    <property type="entry name" value="Translation factors"/>
    <property type="match status" value="1"/>
</dbReference>
<dbReference type="HAMAP" id="MF_00071">
    <property type="entry name" value="LepA"/>
    <property type="match status" value="1"/>
</dbReference>
<dbReference type="InterPro" id="IPR006297">
    <property type="entry name" value="EF-4"/>
</dbReference>
<dbReference type="InterPro" id="IPR035647">
    <property type="entry name" value="EFG_III/V"/>
</dbReference>
<dbReference type="InterPro" id="IPR000640">
    <property type="entry name" value="EFG_V-like"/>
</dbReference>
<dbReference type="InterPro" id="IPR004161">
    <property type="entry name" value="EFTu-like_2"/>
</dbReference>
<dbReference type="InterPro" id="IPR031157">
    <property type="entry name" value="G_TR_CS"/>
</dbReference>
<dbReference type="InterPro" id="IPR038363">
    <property type="entry name" value="LepA_C_sf"/>
</dbReference>
<dbReference type="InterPro" id="IPR013842">
    <property type="entry name" value="LepA_CTD"/>
</dbReference>
<dbReference type="InterPro" id="IPR035654">
    <property type="entry name" value="LepA_IV"/>
</dbReference>
<dbReference type="InterPro" id="IPR027417">
    <property type="entry name" value="P-loop_NTPase"/>
</dbReference>
<dbReference type="InterPro" id="IPR005225">
    <property type="entry name" value="Small_GTP-bd"/>
</dbReference>
<dbReference type="InterPro" id="IPR000795">
    <property type="entry name" value="T_Tr_GTP-bd_dom"/>
</dbReference>
<dbReference type="NCBIfam" id="TIGR01393">
    <property type="entry name" value="lepA"/>
    <property type="match status" value="1"/>
</dbReference>
<dbReference type="NCBIfam" id="TIGR00231">
    <property type="entry name" value="small_GTP"/>
    <property type="match status" value="1"/>
</dbReference>
<dbReference type="PANTHER" id="PTHR43512:SF4">
    <property type="entry name" value="TRANSLATION FACTOR GUF1 HOMOLOG, CHLOROPLASTIC"/>
    <property type="match status" value="1"/>
</dbReference>
<dbReference type="PANTHER" id="PTHR43512">
    <property type="entry name" value="TRANSLATION FACTOR GUF1-RELATED"/>
    <property type="match status" value="1"/>
</dbReference>
<dbReference type="Pfam" id="PF00679">
    <property type="entry name" value="EFG_C"/>
    <property type="match status" value="1"/>
</dbReference>
<dbReference type="Pfam" id="PF00009">
    <property type="entry name" value="GTP_EFTU"/>
    <property type="match status" value="1"/>
</dbReference>
<dbReference type="Pfam" id="PF03144">
    <property type="entry name" value="GTP_EFTU_D2"/>
    <property type="match status" value="1"/>
</dbReference>
<dbReference type="Pfam" id="PF06421">
    <property type="entry name" value="LepA_C"/>
    <property type="match status" value="1"/>
</dbReference>
<dbReference type="PRINTS" id="PR00315">
    <property type="entry name" value="ELONGATNFCT"/>
</dbReference>
<dbReference type="SMART" id="SM00838">
    <property type="entry name" value="EFG_C"/>
    <property type="match status" value="1"/>
</dbReference>
<dbReference type="SUPFAM" id="SSF54980">
    <property type="entry name" value="EF-G C-terminal domain-like"/>
    <property type="match status" value="2"/>
</dbReference>
<dbReference type="SUPFAM" id="SSF52540">
    <property type="entry name" value="P-loop containing nucleoside triphosphate hydrolases"/>
    <property type="match status" value="1"/>
</dbReference>
<dbReference type="PROSITE" id="PS00301">
    <property type="entry name" value="G_TR_1"/>
    <property type="match status" value="1"/>
</dbReference>
<dbReference type="PROSITE" id="PS51722">
    <property type="entry name" value="G_TR_2"/>
    <property type="match status" value="1"/>
</dbReference>
<gene>
    <name evidence="1" type="primary">lepA</name>
    <name type="ordered locus">LMOf2365_1498</name>
</gene>
<keyword id="KW-1003">Cell membrane</keyword>
<keyword id="KW-0342">GTP-binding</keyword>
<keyword id="KW-0378">Hydrolase</keyword>
<keyword id="KW-0472">Membrane</keyword>
<keyword id="KW-0547">Nucleotide-binding</keyword>
<keyword id="KW-0648">Protein biosynthesis</keyword>
<name>LEPA_LISMF</name>
<feature type="chain" id="PRO_0000176292" description="Elongation factor 4">
    <location>
        <begin position="1"/>
        <end position="608"/>
    </location>
</feature>
<feature type="domain" description="tr-type G">
    <location>
        <begin position="11"/>
        <end position="193"/>
    </location>
</feature>
<feature type="binding site" evidence="1">
    <location>
        <begin position="23"/>
        <end position="28"/>
    </location>
    <ligand>
        <name>GTP</name>
        <dbReference type="ChEBI" id="CHEBI:37565"/>
    </ligand>
</feature>
<feature type="binding site" evidence="1">
    <location>
        <begin position="140"/>
        <end position="143"/>
    </location>
    <ligand>
        <name>GTP</name>
        <dbReference type="ChEBI" id="CHEBI:37565"/>
    </ligand>
</feature>
<organism>
    <name type="scientific">Listeria monocytogenes serotype 4b (strain F2365)</name>
    <dbReference type="NCBI Taxonomy" id="265669"/>
    <lineage>
        <taxon>Bacteria</taxon>
        <taxon>Bacillati</taxon>
        <taxon>Bacillota</taxon>
        <taxon>Bacilli</taxon>
        <taxon>Bacillales</taxon>
        <taxon>Listeriaceae</taxon>
        <taxon>Listeria</taxon>
    </lineage>
</organism>
<sequence>MNKEEMNARQKKIRNFSIIAHIDHGKSTLADRILEQTGALTHREMKNQLLDSMDLERERGITIKLNAVQLKYKAKDGETYIFHLIDTPGHVDFTYEVSRSLAACEGAILVVDAAQGIEAQTLANVYLALDNDLEILPVINKIDLPAADPERVREEIEDVIGLDASDAVLASAKSGIGIEDILEQIVEKVPEPSGDVNKPLKALIFDSVFDAYRGVIANIRIMDGVVKAGDRIKMMSNGKEFEVTEVGVFSPKATPRDELLVGDVGYLTAAIKNVGDTRVGDTITLANNPAEEALDGYRKLNPMVYCGLYPIDSSKYNDLRDALEKLELNDSALQFEAETSQALGFGFRCGFLGLLHMEIIQERIEREFNIDLITTAPSVIYHVNLTDGSNIVVDNPAEMPEPGVIESVEEPYVKATVMVPNDYVGAVMELAQNKRGNFITMEYLDDIRVSIVYEIPLSEIVYDFFDQLKSSTKGYASFDYELIGYKASKLVKMDILLNAEKVDALSFIVHRDFAYERGKIIVEKLKELIPRQQFEVPIQAAIATKIVSRSTIKALRKNVLAKCYGGDVSRKRKLLEKQKEGKKRMKQIGSVEVPQEAFMAILKMDESK</sequence>
<comment type="function">
    <text evidence="1">Required for accurate and efficient protein synthesis under certain stress conditions. May act as a fidelity factor of the translation reaction, by catalyzing a one-codon backward translocation of tRNAs on improperly translocated ribosomes. Back-translocation proceeds from a post-translocation (POST) complex to a pre-translocation (PRE) complex, thus giving elongation factor G a second chance to translocate the tRNAs correctly. Binds to ribosomes in a GTP-dependent manner.</text>
</comment>
<comment type="catalytic activity">
    <reaction evidence="1">
        <text>GTP + H2O = GDP + phosphate + H(+)</text>
        <dbReference type="Rhea" id="RHEA:19669"/>
        <dbReference type="ChEBI" id="CHEBI:15377"/>
        <dbReference type="ChEBI" id="CHEBI:15378"/>
        <dbReference type="ChEBI" id="CHEBI:37565"/>
        <dbReference type="ChEBI" id="CHEBI:43474"/>
        <dbReference type="ChEBI" id="CHEBI:58189"/>
        <dbReference type="EC" id="3.6.5.n1"/>
    </reaction>
</comment>
<comment type="subcellular location">
    <subcellularLocation>
        <location evidence="1">Cell membrane</location>
        <topology evidence="1">Peripheral membrane protein</topology>
        <orientation evidence="1">Cytoplasmic side</orientation>
    </subcellularLocation>
</comment>
<comment type="similarity">
    <text evidence="1">Belongs to the TRAFAC class translation factor GTPase superfamily. Classic translation factor GTPase family. LepA subfamily.</text>
</comment>
<reference key="1">
    <citation type="journal article" date="2004" name="Nucleic Acids Res.">
        <title>Whole genome comparisons of serotype 4b and 1/2a strains of the food-borne pathogen Listeria monocytogenes reveal new insights into the core genome components of this species.</title>
        <authorList>
            <person name="Nelson K.E."/>
            <person name="Fouts D.E."/>
            <person name="Mongodin E.F."/>
            <person name="Ravel J."/>
            <person name="DeBoy R.T."/>
            <person name="Kolonay J.F."/>
            <person name="Rasko D.A."/>
            <person name="Angiuoli S.V."/>
            <person name="Gill S.R."/>
            <person name="Paulsen I.T."/>
            <person name="Peterson J.D."/>
            <person name="White O."/>
            <person name="Nelson W.C."/>
            <person name="Nierman W.C."/>
            <person name="Beanan M.J."/>
            <person name="Brinkac L.M."/>
            <person name="Daugherty S.C."/>
            <person name="Dodson R.J."/>
            <person name="Durkin A.S."/>
            <person name="Madupu R."/>
            <person name="Haft D.H."/>
            <person name="Selengut J."/>
            <person name="Van Aken S.E."/>
            <person name="Khouri H.M."/>
            <person name="Fedorova N."/>
            <person name="Forberger H.A."/>
            <person name="Tran B."/>
            <person name="Kathariou S."/>
            <person name="Wonderling L.D."/>
            <person name="Uhlich G.A."/>
            <person name="Bayles D.O."/>
            <person name="Luchansky J.B."/>
            <person name="Fraser C.M."/>
        </authorList>
    </citation>
    <scope>NUCLEOTIDE SEQUENCE [LARGE SCALE GENOMIC DNA]</scope>
    <source>
        <strain>F2365</strain>
    </source>
</reference>
<accession>Q71ZJ1</accession>
<protein>
    <recommendedName>
        <fullName evidence="1">Elongation factor 4</fullName>
        <shortName evidence="1">EF-4</shortName>
        <ecNumber evidence="1">3.6.5.n1</ecNumber>
    </recommendedName>
    <alternativeName>
        <fullName evidence="1">Ribosomal back-translocase LepA</fullName>
    </alternativeName>
</protein>